<reference key="1">
    <citation type="journal article" date="2002" name="J. Bacteriol.">
        <title>Genome sequence and analysis of the oral bacterium Fusobacterium nucleatum strain ATCC 25586.</title>
        <authorList>
            <person name="Kapatral V."/>
            <person name="Anderson I."/>
            <person name="Ivanova N."/>
            <person name="Reznik G."/>
            <person name="Los T."/>
            <person name="Lykidis A."/>
            <person name="Bhattacharyya A."/>
            <person name="Bartman A."/>
            <person name="Gardner W."/>
            <person name="Grechkin G."/>
            <person name="Zhu L."/>
            <person name="Vasieva O."/>
            <person name="Chu L."/>
            <person name="Kogan Y."/>
            <person name="Chaga O."/>
            <person name="Goltsman E."/>
            <person name="Bernal A."/>
            <person name="Larsen N."/>
            <person name="D'Souza M."/>
            <person name="Walunas T."/>
            <person name="Pusch G."/>
            <person name="Haselkorn R."/>
            <person name="Fonstein M."/>
            <person name="Kyrpides N.C."/>
            <person name="Overbeek R."/>
        </authorList>
    </citation>
    <scope>NUCLEOTIDE SEQUENCE [LARGE SCALE GENOMIC DNA]</scope>
    <source>
        <strain>ATCC 25586 / DSM 15643 / BCRC 10681 / CIP 101130 / JCM 8532 / KCTC 2640 / LMG 13131 / VPI 4355</strain>
    </source>
</reference>
<protein>
    <recommendedName>
        <fullName evidence="1">Alanine racemase</fullName>
        <ecNumber evidence="1">5.1.1.1</ecNumber>
    </recommendedName>
</protein>
<feature type="chain" id="PRO_0000114520" description="Alanine racemase">
    <location>
        <begin position="1"/>
        <end position="354"/>
    </location>
</feature>
<feature type="active site" description="Proton acceptor; specific for D-alanine" evidence="1">
    <location>
        <position position="33"/>
    </location>
</feature>
<feature type="active site" description="Proton acceptor; specific for L-alanine" evidence="1">
    <location>
        <position position="251"/>
    </location>
</feature>
<feature type="binding site" evidence="1">
    <location>
        <position position="127"/>
    </location>
    <ligand>
        <name>substrate</name>
    </ligand>
</feature>
<feature type="binding site" evidence="1">
    <location>
        <position position="299"/>
    </location>
    <ligand>
        <name>substrate</name>
    </ligand>
</feature>
<feature type="modified residue" description="N6-(pyridoxal phosphate)lysine" evidence="1">
    <location>
        <position position="33"/>
    </location>
</feature>
<sequence>MRTWIEIDKENLKYNVLKLKEIANNKEILGVVKANAYGLGSIEIAKILKEVEVKLFGVANLEEAIELQEAGIKDKILILGASFEDELVEATKRGVHVAISSMGQLQFLVSKNLNPNIHLKFDTGMTRLGFEVDDAEKVIEYCKNNNLNLVGIFSHLSDSDGNTIETKNFTLEQIEKFKKIVNSLNLEYIHISNSAGITNFHNDILGNLVRLGIGMYSFTGNKKTPYLKNIFTIKSKILFIKKVKKDSFVSYGRHYTLPADSTYAVLPIGYADGLKKYLSKGGYVLINNHRCEIIGNICMDMTMIRVPKEIENSIKIGDEVTVINADILDNLNIPELCVWEFMTGIGRRVKRIIV</sequence>
<gene>
    <name type="primary">alr</name>
    <name type="ordered locus">FN0406</name>
</gene>
<evidence type="ECO:0000255" key="1">
    <source>
        <dbReference type="HAMAP-Rule" id="MF_01201"/>
    </source>
</evidence>
<keyword id="KW-0413">Isomerase</keyword>
<keyword id="KW-0663">Pyridoxal phosphate</keyword>
<keyword id="KW-1185">Reference proteome</keyword>
<comment type="function">
    <text evidence="1">Catalyzes the interconversion of L-alanine and D-alanine. May also act on other amino acids.</text>
</comment>
<comment type="catalytic activity">
    <reaction evidence="1">
        <text>L-alanine = D-alanine</text>
        <dbReference type="Rhea" id="RHEA:20249"/>
        <dbReference type="ChEBI" id="CHEBI:57416"/>
        <dbReference type="ChEBI" id="CHEBI:57972"/>
        <dbReference type="EC" id="5.1.1.1"/>
    </reaction>
</comment>
<comment type="cofactor">
    <cofactor evidence="1">
        <name>pyridoxal 5'-phosphate</name>
        <dbReference type="ChEBI" id="CHEBI:597326"/>
    </cofactor>
</comment>
<comment type="pathway">
    <text evidence="1">Amino-acid biosynthesis; D-alanine biosynthesis; D-alanine from L-alanine: step 1/1.</text>
</comment>
<comment type="similarity">
    <text evidence="1">Belongs to the alanine racemase family.</text>
</comment>
<organism>
    <name type="scientific">Fusobacterium nucleatum subsp. nucleatum (strain ATCC 25586 / DSM 15643 / BCRC 10681 / CIP 101130 / JCM 8532 / KCTC 2640 / LMG 13131 / VPI 4355)</name>
    <dbReference type="NCBI Taxonomy" id="190304"/>
    <lineage>
        <taxon>Bacteria</taxon>
        <taxon>Fusobacteriati</taxon>
        <taxon>Fusobacteriota</taxon>
        <taxon>Fusobacteriia</taxon>
        <taxon>Fusobacteriales</taxon>
        <taxon>Fusobacteriaceae</taxon>
        <taxon>Fusobacterium</taxon>
    </lineage>
</organism>
<name>ALR_FUSNN</name>
<accession>Q8RGA2</accession>
<proteinExistence type="inferred from homology"/>
<dbReference type="EC" id="5.1.1.1" evidence="1"/>
<dbReference type="EMBL" id="AE009951">
    <property type="protein sequence ID" value="AAL94609.1"/>
    <property type="molecule type" value="Genomic_DNA"/>
</dbReference>
<dbReference type="RefSeq" id="NP_603310.1">
    <property type="nucleotide sequence ID" value="NC_003454.1"/>
</dbReference>
<dbReference type="RefSeq" id="WP_011016367.1">
    <property type="nucleotide sequence ID" value="NZ_OZ209243.1"/>
</dbReference>
<dbReference type="SMR" id="Q8RGA2"/>
<dbReference type="FunCoup" id="Q8RGA2">
    <property type="interactions" value="261"/>
</dbReference>
<dbReference type="STRING" id="190304.FN0406"/>
<dbReference type="PaxDb" id="190304-FN0406"/>
<dbReference type="EnsemblBacteria" id="AAL94609">
    <property type="protein sequence ID" value="AAL94609"/>
    <property type="gene ID" value="FN0406"/>
</dbReference>
<dbReference type="GeneID" id="79783412"/>
<dbReference type="KEGG" id="fnu:FN0406"/>
<dbReference type="PATRIC" id="fig|190304.8.peg.981"/>
<dbReference type="eggNOG" id="COG0787">
    <property type="taxonomic scope" value="Bacteria"/>
</dbReference>
<dbReference type="HOGENOM" id="CLU_028393_2_2_0"/>
<dbReference type="InParanoid" id="Q8RGA2"/>
<dbReference type="BioCyc" id="FNUC190304:G1FZS-1000-MONOMER"/>
<dbReference type="UniPathway" id="UPA00042">
    <property type="reaction ID" value="UER00497"/>
</dbReference>
<dbReference type="Proteomes" id="UP000002521">
    <property type="component" value="Chromosome"/>
</dbReference>
<dbReference type="GO" id="GO:0005829">
    <property type="term" value="C:cytosol"/>
    <property type="evidence" value="ECO:0000318"/>
    <property type="project" value="GO_Central"/>
</dbReference>
<dbReference type="GO" id="GO:0008784">
    <property type="term" value="F:alanine racemase activity"/>
    <property type="evidence" value="ECO:0000318"/>
    <property type="project" value="GO_Central"/>
</dbReference>
<dbReference type="GO" id="GO:0030170">
    <property type="term" value="F:pyridoxal phosphate binding"/>
    <property type="evidence" value="ECO:0000318"/>
    <property type="project" value="GO_Central"/>
</dbReference>
<dbReference type="GO" id="GO:0030632">
    <property type="term" value="P:D-alanine biosynthetic process"/>
    <property type="evidence" value="ECO:0000318"/>
    <property type="project" value="GO_Central"/>
</dbReference>
<dbReference type="CDD" id="cd00430">
    <property type="entry name" value="PLPDE_III_AR"/>
    <property type="match status" value="1"/>
</dbReference>
<dbReference type="FunFam" id="3.20.20.10:FF:000002">
    <property type="entry name" value="Alanine racemase"/>
    <property type="match status" value="1"/>
</dbReference>
<dbReference type="Gene3D" id="3.20.20.10">
    <property type="entry name" value="Alanine racemase"/>
    <property type="match status" value="1"/>
</dbReference>
<dbReference type="Gene3D" id="2.40.37.10">
    <property type="entry name" value="Lyase, Ornithine Decarboxylase, Chain A, domain 1"/>
    <property type="match status" value="1"/>
</dbReference>
<dbReference type="HAMAP" id="MF_01201">
    <property type="entry name" value="Ala_racemase"/>
    <property type="match status" value="1"/>
</dbReference>
<dbReference type="InterPro" id="IPR000821">
    <property type="entry name" value="Ala_racemase"/>
</dbReference>
<dbReference type="InterPro" id="IPR009006">
    <property type="entry name" value="Ala_racemase/Decarboxylase_C"/>
</dbReference>
<dbReference type="InterPro" id="IPR011079">
    <property type="entry name" value="Ala_racemase_C"/>
</dbReference>
<dbReference type="InterPro" id="IPR001608">
    <property type="entry name" value="Ala_racemase_N"/>
</dbReference>
<dbReference type="InterPro" id="IPR020622">
    <property type="entry name" value="Ala_racemase_pyridoxalP-BS"/>
</dbReference>
<dbReference type="InterPro" id="IPR029066">
    <property type="entry name" value="PLP-binding_barrel"/>
</dbReference>
<dbReference type="NCBIfam" id="TIGR00492">
    <property type="entry name" value="alr"/>
    <property type="match status" value="1"/>
</dbReference>
<dbReference type="PANTHER" id="PTHR30511">
    <property type="entry name" value="ALANINE RACEMASE"/>
    <property type="match status" value="1"/>
</dbReference>
<dbReference type="PANTHER" id="PTHR30511:SF0">
    <property type="entry name" value="ALANINE RACEMASE, CATABOLIC-RELATED"/>
    <property type="match status" value="1"/>
</dbReference>
<dbReference type="Pfam" id="PF00842">
    <property type="entry name" value="Ala_racemase_C"/>
    <property type="match status" value="1"/>
</dbReference>
<dbReference type="Pfam" id="PF01168">
    <property type="entry name" value="Ala_racemase_N"/>
    <property type="match status" value="1"/>
</dbReference>
<dbReference type="PRINTS" id="PR00992">
    <property type="entry name" value="ALARACEMASE"/>
</dbReference>
<dbReference type="SMART" id="SM01005">
    <property type="entry name" value="Ala_racemase_C"/>
    <property type="match status" value="1"/>
</dbReference>
<dbReference type="SUPFAM" id="SSF50621">
    <property type="entry name" value="Alanine racemase C-terminal domain-like"/>
    <property type="match status" value="1"/>
</dbReference>
<dbReference type="SUPFAM" id="SSF51419">
    <property type="entry name" value="PLP-binding barrel"/>
    <property type="match status" value="1"/>
</dbReference>
<dbReference type="PROSITE" id="PS00395">
    <property type="entry name" value="ALANINE_RACEMASE"/>
    <property type="match status" value="1"/>
</dbReference>